<dbReference type="EC" id="2.3.1.-" evidence="1"/>
<dbReference type="EC" id="2.3.1.51" evidence="2"/>
<dbReference type="EMBL" id="BC066444">
    <property type="protein sequence ID" value="AAH66444.1"/>
    <property type="molecule type" value="mRNA"/>
</dbReference>
<dbReference type="RefSeq" id="NP_998435.1">
    <property type="nucleotide sequence ID" value="NM_213270.2"/>
</dbReference>
<dbReference type="FunCoup" id="Q6NYV8">
    <property type="interactions" value="1188"/>
</dbReference>
<dbReference type="STRING" id="7955.ENSDARP00000138738"/>
<dbReference type="Ensembl" id="ENSDART00000161098">
    <property type="protein sequence ID" value="ENSDARP00000138738"/>
    <property type="gene ID" value="ENSDARG00000103320"/>
</dbReference>
<dbReference type="GeneID" id="406554"/>
<dbReference type="KEGG" id="dre:406554"/>
<dbReference type="AGR" id="ZFIN:ZDB-GENE-081211-2"/>
<dbReference type="CTD" id="253558"/>
<dbReference type="ZFIN" id="ZDB-GENE-081211-2">
    <property type="gene designation" value="lclat1"/>
</dbReference>
<dbReference type="HOGENOM" id="CLU_041844_4_0_1"/>
<dbReference type="InParanoid" id="Q6NYV8"/>
<dbReference type="OMA" id="VANHVAW"/>
<dbReference type="OrthoDB" id="186786at2759"/>
<dbReference type="PhylomeDB" id="Q6NYV8"/>
<dbReference type="Reactome" id="R-DRE-1482798">
    <property type="pathway name" value="Acyl chain remodeling of CL"/>
</dbReference>
<dbReference type="Reactome" id="R-DRE-1483166">
    <property type="pathway name" value="Synthesis of PA"/>
</dbReference>
<dbReference type="UniPathway" id="UPA00557">
    <property type="reaction ID" value="UER00613"/>
</dbReference>
<dbReference type="PRO" id="PR:Q6NYV8"/>
<dbReference type="Proteomes" id="UP000000437">
    <property type="component" value="Chromosome 13"/>
</dbReference>
<dbReference type="Bgee" id="ENSDARG00000103320">
    <property type="expression patterns" value="Expressed in intestine and 23 other cell types or tissues"/>
</dbReference>
<dbReference type="GO" id="GO:0012505">
    <property type="term" value="C:endomembrane system"/>
    <property type="evidence" value="ECO:0000318"/>
    <property type="project" value="GO_Central"/>
</dbReference>
<dbReference type="GO" id="GO:0005783">
    <property type="term" value="C:endoplasmic reticulum"/>
    <property type="evidence" value="ECO:0000250"/>
    <property type="project" value="UniProtKB"/>
</dbReference>
<dbReference type="GO" id="GO:0005789">
    <property type="term" value="C:endoplasmic reticulum membrane"/>
    <property type="evidence" value="ECO:0007669"/>
    <property type="project" value="UniProtKB-SubCell"/>
</dbReference>
<dbReference type="GO" id="GO:0003841">
    <property type="term" value="F:1-acylglycerol-3-phosphate O-acyltransferase activity"/>
    <property type="evidence" value="ECO:0000250"/>
    <property type="project" value="UniProtKB"/>
</dbReference>
<dbReference type="GO" id="GO:0016746">
    <property type="term" value="F:acyltransferase activity"/>
    <property type="evidence" value="ECO:0000318"/>
    <property type="project" value="GO_Central"/>
</dbReference>
<dbReference type="GO" id="GO:0016024">
    <property type="term" value="P:CDP-diacylglycerol biosynthetic process"/>
    <property type="evidence" value="ECO:0007669"/>
    <property type="project" value="UniProtKB-UniPathway"/>
</dbReference>
<dbReference type="GO" id="GO:0035162">
    <property type="term" value="P:embryonic hemopoiesis"/>
    <property type="evidence" value="ECO:0000314"/>
    <property type="project" value="ZFIN"/>
</dbReference>
<dbReference type="GO" id="GO:0001885">
    <property type="term" value="P:endothelial cell development"/>
    <property type="evidence" value="ECO:0000315"/>
    <property type="project" value="ZFIN"/>
</dbReference>
<dbReference type="GO" id="GO:0060217">
    <property type="term" value="P:hemangioblast cell differentiation"/>
    <property type="evidence" value="ECO:0000315"/>
    <property type="project" value="ZFIN"/>
</dbReference>
<dbReference type="GO" id="GO:0036149">
    <property type="term" value="P:phosphatidylinositol acyl-chain remodeling"/>
    <property type="evidence" value="ECO:0000318"/>
    <property type="project" value="GO_Central"/>
</dbReference>
<dbReference type="CDD" id="cd07990">
    <property type="entry name" value="LPLAT_LCLAT1-like"/>
    <property type="match status" value="1"/>
</dbReference>
<dbReference type="InterPro" id="IPR032098">
    <property type="entry name" value="Acyltransf_C"/>
</dbReference>
<dbReference type="InterPro" id="IPR002123">
    <property type="entry name" value="Plipid/glycerol_acylTrfase"/>
</dbReference>
<dbReference type="PANTHER" id="PTHR10983">
    <property type="entry name" value="1-ACYLGLYCEROL-3-PHOSPHATE ACYLTRANSFERASE-RELATED"/>
    <property type="match status" value="1"/>
</dbReference>
<dbReference type="PANTHER" id="PTHR10983:SF16">
    <property type="entry name" value="LYSOCARDIOLIPIN ACYLTRANSFERASE 1"/>
    <property type="match status" value="1"/>
</dbReference>
<dbReference type="Pfam" id="PF16076">
    <property type="entry name" value="Acyltransf_C"/>
    <property type="match status" value="1"/>
</dbReference>
<dbReference type="Pfam" id="PF01553">
    <property type="entry name" value="Acyltransferase"/>
    <property type="match status" value="1"/>
</dbReference>
<dbReference type="SMART" id="SM00563">
    <property type="entry name" value="PlsC"/>
    <property type="match status" value="1"/>
</dbReference>
<dbReference type="SUPFAM" id="SSF69593">
    <property type="entry name" value="Glycerol-3-phosphate (1)-acyltransferase"/>
    <property type="match status" value="1"/>
</dbReference>
<feature type="chain" id="PRO_0000291580" description="Lysocardiolipin acyltransferase 1">
    <location>
        <begin position="1"/>
        <end position="388"/>
    </location>
</feature>
<feature type="transmembrane region" description="Helical" evidence="4">
    <location>
        <begin position="9"/>
        <end position="29"/>
    </location>
</feature>
<feature type="transmembrane region" description="Helical" evidence="4">
    <location>
        <begin position="46"/>
        <end position="66"/>
    </location>
</feature>
<feature type="transmembrane region" description="Helical" evidence="4">
    <location>
        <begin position="321"/>
        <end position="341"/>
    </location>
</feature>
<feature type="transmembrane region" description="Helical" evidence="4">
    <location>
        <begin position="342"/>
        <end position="362"/>
    </location>
</feature>
<feature type="short sequence motif" description="HXXXXD motif" evidence="3">
    <location>
        <begin position="85"/>
        <end position="90"/>
    </location>
</feature>
<feature type="mutagenesis site" description="Abolishes function in hematopoietic development; when associated with L-166." evidence="5">
    <original>E</original>
    <variation>R</variation>
    <location>
        <position position="165"/>
    </location>
</feature>
<feature type="mutagenesis site" description="Abolishes function in hematopoietic development; when associated with R-165." evidence="5">
    <original>G</original>
    <variation>L</variation>
    <location>
        <position position="166"/>
    </location>
</feature>
<sequence>MVSPRGVCFLLFLLLGSVFGSVFMLGPLLPLMLLSPSRYRWITDRIVATWLTLPVALLELVLGVKVVVTGDGFIPGERSVIIMNHRTRLDWMFLWCCLLRYSYLRQEKICLKAALKSVPGFGWAMQVASFIFIQRRWEDDRTHMSNMLQYFCRIREPVQLLLFPEGTDLTENTRARSDEFAEKNGLQKYEYVLHPRTTGFTFIVDTLRGGDNLDAVHDITVAYPQNIPQTERHLLAGVFPREIHFHVQRFTVASVPAGAAGLQAWCQERWREKERRLQRFYETVPRRFDAPAVGVCVREPCCQSGQCVCVPRCKSEGRVRIILVASLLYWSVFITAACASLCLCPPAQFYFLFMVVFFLCQQRFTGGLELMELACHRYWSRRSADKQE</sequence>
<name>LCLT1_DANRE</name>
<reference key="1">
    <citation type="submission" date="2004-02" db="EMBL/GenBank/DDBJ databases">
        <authorList>
            <consortium name="NIH - Zebrafish Gene Collection (ZGC) project"/>
        </authorList>
    </citation>
    <scope>NUCLEOTIDE SEQUENCE [LARGE SCALE MRNA]</scope>
    <source>
        <tissue>Embryo</tissue>
    </source>
</reference>
<reference key="2">
    <citation type="journal article" date="2008" name="Circ. Res.">
        <title>An acyltransferase controls the generation of hematopoietic and endothelial lineages in zebrafish.</title>
        <authorList>
            <person name="Xiong J.-W."/>
            <person name="Yu Q."/>
            <person name="Zhang J."/>
            <person name="Mably J.D."/>
        </authorList>
    </citation>
    <scope>FUNCTION</scope>
    <scope>MUTAGENESIS OF GLU-165 AND GLY-166</scope>
</reference>
<gene>
    <name type="primary">lclat1</name>
    <name evidence="2" type="synonym">agpat8</name>
    <name type="synonym">lycat</name>
    <name type="ORF">zgc:77380</name>
</gene>
<evidence type="ECO:0000250" key="1">
    <source>
        <dbReference type="UniProtKB" id="Q3UN02"/>
    </source>
</evidence>
<evidence type="ECO:0000250" key="2">
    <source>
        <dbReference type="UniProtKB" id="Q6UWP7"/>
    </source>
</evidence>
<evidence type="ECO:0000250" key="3">
    <source>
        <dbReference type="UniProtKB" id="Q9D517"/>
    </source>
</evidence>
<evidence type="ECO:0000255" key="4"/>
<evidence type="ECO:0000269" key="5">
    <source>
    </source>
</evidence>
<evidence type="ECO:0000305" key="6"/>
<keyword id="KW-0012">Acyltransferase</keyword>
<keyword id="KW-0217">Developmental protein</keyword>
<keyword id="KW-0256">Endoplasmic reticulum</keyword>
<keyword id="KW-0444">Lipid biosynthesis</keyword>
<keyword id="KW-0443">Lipid metabolism</keyword>
<keyword id="KW-0472">Membrane</keyword>
<keyword id="KW-0594">Phospholipid biosynthesis</keyword>
<keyword id="KW-1208">Phospholipid metabolism</keyword>
<keyword id="KW-1185">Reference proteome</keyword>
<keyword id="KW-0808">Transferase</keyword>
<keyword id="KW-0812">Transmembrane</keyword>
<keyword id="KW-1133">Transmembrane helix</keyword>
<organism>
    <name type="scientific">Danio rerio</name>
    <name type="common">Zebrafish</name>
    <name type="synonym">Brachydanio rerio</name>
    <dbReference type="NCBI Taxonomy" id="7955"/>
    <lineage>
        <taxon>Eukaryota</taxon>
        <taxon>Metazoa</taxon>
        <taxon>Chordata</taxon>
        <taxon>Craniata</taxon>
        <taxon>Vertebrata</taxon>
        <taxon>Euteleostomi</taxon>
        <taxon>Actinopterygii</taxon>
        <taxon>Neopterygii</taxon>
        <taxon>Teleostei</taxon>
        <taxon>Ostariophysi</taxon>
        <taxon>Cypriniformes</taxon>
        <taxon>Danionidae</taxon>
        <taxon>Danioninae</taxon>
        <taxon>Danio</taxon>
    </lineage>
</organism>
<proteinExistence type="evidence at protein level"/>
<comment type="function">
    <text evidence="1 2 5">Exhibits acyl-CoA:lysocardiolipin acyltransferase (ALCAT) activity; catalyzes the reacylation of lyso-cardiolipin to cardiolipin (CL), a key step in CL remodeling (By similarity). Recognizes both monolysocardiolipin and dilysocardiolipin as substrates with a preference for linoleoyl-CoA and oleoyl-CoA as acyl donors (By similarity). Also exhibits 1-acyl-sn-glycerol-3-phosphate acyltransferase activity (AGPAT) activity; converts 1-acyl-sn-glycerol-3- phosphate (lysophosphatidic acid or LPA) into 1,2-diacyl-sn-glycerol-3- phosphate (phosphatidic acid or PA) by incorporating an acyl moiety at the sn-2 position of the glycerol backbone (By similarity). Possesses both lysophosphatidylinositol acyltransferase (LPIAT) and lysophosphatidylglycerol acyltransferase (LPGAT) activities (By similarity). Required for establishment of the hematopoietic and endothelial lineages (PubMed:18388326).</text>
</comment>
<comment type="catalytic activity">
    <reaction evidence="2">
        <text>a 1-acyl-sn-glycero-3-phosphate + an acyl-CoA = a 1,2-diacyl-sn-glycero-3-phosphate + CoA</text>
        <dbReference type="Rhea" id="RHEA:19709"/>
        <dbReference type="ChEBI" id="CHEBI:57287"/>
        <dbReference type="ChEBI" id="CHEBI:57970"/>
        <dbReference type="ChEBI" id="CHEBI:58342"/>
        <dbReference type="ChEBI" id="CHEBI:58608"/>
        <dbReference type="EC" id="2.3.1.51"/>
    </reaction>
    <physiologicalReaction direction="left-to-right" evidence="2">
        <dbReference type="Rhea" id="RHEA:19710"/>
    </physiologicalReaction>
</comment>
<comment type="catalytic activity">
    <reaction evidence="2">
        <text>a 1-acyl-sn-glycero-3-phospho-(1D-myo-inositol) + an acyl-CoA = a 1,2-diacyl-sn-glycero-3-phospho-(1D-myo-inositol) + CoA</text>
        <dbReference type="Rhea" id="RHEA:33195"/>
        <dbReference type="ChEBI" id="CHEBI:57287"/>
        <dbReference type="ChEBI" id="CHEBI:57880"/>
        <dbReference type="ChEBI" id="CHEBI:58342"/>
        <dbReference type="ChEBI" id="CHEBI:64771"/>
    </reaction>
    <physiologicalReaction direction="left-to-right" evidence="2">
        <dbReference type="Rhea" id="RHEA:33196"/>
    </physiologicalReaction>
</comment>
<comment type="catalytic activity">
    <reaction evidence="2">
        <text>1-acyl-sn-glycero-3-phospho-(1'-sn-glycerol) + an acyl-CoA = a 1,2-diacyl-sn-glycero-3-phospho-(1'-sn-glycerol) + CoA</text>
        <dbReference type="Rhea" id="RHEA:33203"/>
        <dbReference type="ChEBI" id="CHEBI:57287"/>
        <dbReference type="ChEBI" id="CHEBI:58342"/>
        <dbReference type="ChEBI" id="CHEBI:64716"/>
        <dbReference type="ChEBI" id="CHEBI:64840"/>
    </reaction>
    <physiologicalReaction direction="left-to-right" evidence="2">
        <dbReference type="Rhea" id="RHEA:33204"/>
    </physiologicalReaction>
</comment>
<comment type="catalytic activity">
    <reaction evidence="2">
        <text>1-hexadecanoyl-sn-glycero-3-phosphate + (9Z)-octadecenoyl-CoA = 1-hexadecanoyl-2-(9Z-octadecenoyl)-sn-glycero-3-phosphate + CoA</text>
        <dbReference type="Rhea" id="RHEA:33187"/>
        <dbReference type="ChEBI" id="CHEBI:57287"/>
        <dbReference type="ChEBI" id="CHEBI:57387"/>
        <dbReference type="ChEBI" id="CHEBI:57518"/>
        <dbReference type="ChEBI" id="CHEBI:64839"/>
    </reaction>
    <physiologicalReaction direction="left-to-right" evidence="2">
        <dbReference type="Rhea" id="RHEA:33188"/>
    </physiologicalReaction>
</comment>
<comment type="catalytic activity">
    <reaction evidence="2">
        <text>1-(9Z-octadecenoyl)-sn-glycero-3-phosphate + (9Z)-octadecenoyl-CoA = 1,2-di-(9Z-octadecenoyl)-sn-glycero-3-phosphate + CoA</text>
        <dbReference type="Rhea" id="RHEA:37131"/>
        <dbReference type="ChEBI" id="CHEBI:57287"/>
        <dbReference type="ChEBI" id="CHEBI:57387"/>
        <dbReference type="ChEBI" id="CHEBI:74544"/>
        <dbReference type="ChEBI" id="CHEBI:74546"/>
    </reaction>
    <physiologicalReaction direction="left-to-right" evidence="2">
        <dbReference type="Rhea" id="RHEA:37132"/>
    </physiologicalReaction>
</comment>
<comment type="catalytic activity">
    <reaction evidence="2">
        <text>1-(9Z,12Z)-octadecadienoyl-sn-glycero-3-phosphate + (9Z)-octadecenoyl-CoA = 1-(9Z,12Z)-octadecadienoyl-2-(9Z)-octadecenoyl-sn-glycero-3-phosphate + CoA</text>
        <dbReference type="Rhea" id="RHEA:37135"/>
        <dbReference type="ChEBI" id="CHEBI:57287"/>
        <dbReference type="ChEBI" id="CHEBI:57387"/>
        <dbReference type="ChEBI" id="CHEBI:74547"/>
        <dbReference type="ChEBI" id="CHEBI:74548"/>
    </reaction>
    <physiologicalReaction direction="left-to-right" evidence="2">
        <dbReference type="Rhea" id="RHEA:37136"/>
    </physiologicalReaction>
</comment>
<comment type="catalytic activity">
    <reaction evidence="2">
        <text>1-(9Z,12Z,15Z)-octadecatrienoyl-sn-glycero-3-phosphate + (9Z)-octadecenoyl-CoA = 1-(9Z,12Z,15Z)-octadecatrienoyl-2-(9Z)-octadecenoyl-sn-glycero-3-phosphate + CoA</text>
        <dbReference type="Rhea" id="RHEA:37139"/>
        <dbReference type="ChEBI" id="CHEBI:57287"/>
        <dbReference type="ChEBI" id="CHEBI:57387"/>
        <dbReference type="ChEBI" id="CHEBI:74549"/>
        <dbReference type="ChEBI" id="CHEBI:74550"/>
    </reaction>
    <physiologicalReaction direction="left-to-right" evidence="2">
        <dbReference type="Rhea" id="RHEA:37140"/>
    </physiologicalReaction>
</comment>
<comment type="catalytic activity">
    <reaction evidence="2">
        <text>1-(9Z-octadecenoyl)-sn-glycero-3-phosphate + hexadecanoyl-CoA = 1-(9Z)-octadecenoyl-2-hexadecanoyl-sn-glycero-3-phosphate + CoA</text>
        <dbReference type="Rhea" id="RHEA:37143"/>
        <dbReference type="ChEBI" id="CHEBI:57287"/>
        <dbReference type="ChEBI" id="CHEBI:57379"/>
        <dbReference type="ChEBI" id="CHEBI:74544"/>
        <dbReference type="ChEBI" id="CHEBI:74551"/>
    </reaction>
    <physiologicalReaction direction="left-to-right" evidence="2">
        <dbReference type="Rhea" id="RHEA:37144"/>
    </physiologicalReaction>
</comment>
<comment type="catalytic activity">
    <reaction evidence="2">
        <text>1-(9Z-octadecenoyl)-sn-glycero-3-phosphate + octadecanoyl-CoA = 1-(9Z-octadecenoyl)-2-octadecanoyl-sn-glycero-3-phosphate + CoA</text>
        <dbReference type="Rhea" id="RHEA:37147"/>
        <dbReference type="ChEBI" id="CHEBI:57287"/>
        <dbReference type="ChEBI" id="CHEBI:57394"/>
        <dbReference type="ChEBI" id="CHEBI:74544"/>
        <dbReference type="ChEBI" id="CHEBI:74552"/>
    </reaction>
    <physiologicalReaction direction="left-to-right" evidence="2">
        <dbReference type="Rhea" id="RHEA:37148"/>
    </physiologicalReaction>
</comment>
<comment type="catalytic activity">
    <reaction evidence="2">
        <text>1-acyl-sn-glycero-3-phospho-(1'-sn-glycerol) + (9Z)-octadecenoyl-CoA = 1-acyl-2-(9Z-octadecenoyl)-sn-glycero-3-phospho-(1'-sn-glycerol) + CoA</text>
        <dbReference type="Rhea" id="RHEA:37619"/>
        <dbReference type="ChEBI" id="CHEBI:57287"/>
        <dbReference type="ChEBI" id="CHEBI:57387"/>
        <dbReference type="ChEBI" id="CHEBI:64840"/>
        <dbReference type="ChEBI" id="CHEBI:75173"/>
    </reaction>
    <physiologicalReaction direction="left-to-right" evidence="2">
        <dbReference type="Rhea" id="RHEA:37620"/>
    </physiologicalReaction>
</comment>
<comment type="catalytic activity">
    <reaction evidence="2">
        <text>a 1-acyl-sn-glycero-3-phospho-(1D-myo-inositol) + (9Z)-octadecenoyl-CoA = a 1-acyl-2-(9Z-octadecenoyl)-sn-glycero-3-phospho-(1D-myo-inositol) + CoA</text>
        <dbReference type="Rhea" id="RHEA:37623"/>
        <dbReference type="ChEBI" id="CHEBI:57287"/>
        <dbReference type="ChEBI" id="CHEBI:57387"/>
        <dbReference type="ChEBI" id="CHEBI:64771"/>
        <dbReference type="ChEBI" id="CHEBI:75116"/>
    </reaction>
    <physiologicalReaction direction="left-to-right" evidence="2">
        <dbReference type="Rhea" id="RHEA:37624"/>
    </physiologicalReaction>
</comment>
<comment type="catalytic activity">
    <reaction evidence="2">
        <text>1-hexadecanoyl-sn-glycero-3-phospho-(1D-myo-inositol) + hexadecanoyl-CoA = 1,2-dihexadecanoyl-sn-glycero-3-phospho-(1D-myo-inositol) + CoA</text>
        <dbReference type="Rhea" id="RHEA:35871"/>
        <dbReference type="ChEBI" id="CHEBI:57287"/>
        <dbReference type="ChEBI" id="CHEBI:57379"/>
        <dbReference type="ChEBI" id="CHEBI:72833"/>
        <dbReference type="ChEBI" id="CHEBI:72835"/>
    </reaction>
    <physiologicalReaction direction="left-to-right" evidence="2">
        <dbReference type="Rhea" id="RHEA:35872"/>
    </physiologicalReaction>
</comment>
<comment type="catalytic activity">
    <reaction evidence="2">
        <text>1-hexadecanoyl-sn-glycero-3-phospho-(1D-myo-inositol) + octadecanoyl-CoA = 1-hexadecanoyl-2-octadecanoyl-sn-glycero-3-phospho-(1D-myo-inositol) + CoA</text>
        <dbReference type="Rhea" id="RHEA:35875"/>
        <dbReference type="ChEBI" id="CHEBI:57287"/>
        <dbReference type="ChEBI" id="CHEBI:57394"/>
        <dbReference type="ChEBI" id="CHEBI:72833"/>
        <dbReference type="ChEBI" id="CHEBI:72836"/>
    </reaction>
    <physiologicalReaction direction="left-to-right" evidence="2">
        <dbReference type="Rhea" id="RHEA:35876"/>
    </physiologicalReaction>
</comment>
<comment type="catalytic activity">
    <reaction evidence="2">
        <text>1-hexadecanoyl-sn-glycero-3-phospho-(1D-myo-inositol) + (9Z)-octadecenoyl-CoA = 1-hexadecanoyl-2-(9Z-octadecenoyl)-sn-glycero-3-phospho-(1D-myo-inositol) + CoA</text>
        <dbReference type="Rhea" id="RHEA:35879"/>
        <dbReference type="ChEBI" id="CHEBI:57287"/>
        <dbReference type="ChEBI" id="CHEBI:57387"/>
        <dbReference type="ChEBI" id="CHEBI:72833"/>
        <dbReference type="ChEBI" id="CHEBI:72837"/>
    </reaction>
    <physiologicalReaction direction="left-to-right" evidence="2">
        <dbReference type="Rhea" id="RHEA:35880"/>
    </physiologicalReaction>
</comment>
<comment type="catalytic activity">
    <reaction evidence="2">
        <text>1-hexadecanoyl-sn-glycero-3-phospho-(1D-myo-inositol) + (9Z,12Z)-octadecadienoyl-CoA = 1-hexadecanoyl-2-(9Z,12Z-octadecadienoyl)-sn-glycero-3-phospho-(1D-myo-inositol) + CoA</text>
        <dbReference type="Rhea" id="RHEA:35883"/>
        <dbReference type="ChEBI" id="CHEBI:57287"/>
        <dbReference type="ChEBI" id="CHEBI:57383"/>
        <dbReference type="ChEBI" id="CHEBI:72833"/>
        <dbReference type="ChEBI" id="CHEBI:72838"/>
    </reaction>
    <physiologicalReaction direction="left-to-right" evidence="2">
        <dbReference type="Rhea" id="RHEA:35884"/>
    </physiologicalReaction>
</comment>
<comment type="catalytic activity">
    <reaction evidence="2">
        <text>1-hexadecanoyl-sn-glycero-3-phospho-(1D-myo-inositol) + (5Z,8Z,11Z,14Z)-eicosatetraenoyl-CoA = 1-hexadecanoyl-2-(5Z,8Z,11Z,14Z-eicosatetraenoyl)-sn-glycero-3-phospho-D-myo-inositol + CoA</text>
        <dbReference type="Rhea" id="RHEA:35867"/>
        <dbReference type="ChEBI" id="CHEBI:57287"/>
        <dbReference type="ChEBI" id="CHEBI:57368"/>
        <dbReference type="ChEBI" id="CHEBI:72833"/>
        <dbReference type="ChEBI" id="CHEBI:72834"/>
    </reaction>
    <physiologicalReaction direction="left-to-right" evidence="2">
        <dbReference type="Rhea" id="RHEA:35868"/>
    </physiologicalReaction>
</comment>
<comment type="catalytic activity">
    <reaction evidence="2">
        <text>1-hexadecanoyl-sn-glycero-3-phospho-(1'-sn-glycerol) + hexadecanoyl-CoA = 1,2-dihexadecanoyl-sn-glycero-3-phospho-(1'-sn-glycerol) + CoA</text>
        <dbReference type="Rhea" id="RHEA:35851"/>
        <dbReference type="ChEBI" id="CHEBI:57287"/>
        <dbReference type="ChEBI" id="CHEBI:57379"/>
        <dbReference type="ChEBI" id="CHEBI:72829"/>
        <dbReference type="ChEBI" id="CHEBI:75158"/>
    </reaction>
    <physiologicalReaction direction="left-to-right" evidence="2">
        <dbReference type="Rhea" id="RHEA:35852"/>
    </physiologicalReaction>
</comment>
<comment type="catalytic activity">
    <reaction evidence="2">
        <text>1-hexadecanoyl-sn-glycero-3-phospho-(1'-sn-glycerol) + octadecanoyl-CoA = 1-hexadecanoyl-2-octadecanoyl-sn-glycero-3-phospho-(1'-sn-glycerol) + CoA</text>
        <dbReference type="Rhea" id="RHEA:35887"/>
        <dbReference type="ChEBI" id="CHEBI:57287"/>
        <dbReference type="ChEBI" id="CHEBI:57394"/>
        <dbReference type="ChEBI" id="CHEBI:72839"/>
        <dbReference type="ChEBI" id="CHEBI:75158"/>
    </reaction>
    <physiologicalReaction direction="left-to-right" evidence="2">
        <dbReference type="Rhea" id="RHEA:35888"/>
    </physiologicalReaction>
</comment>
<comment type="catalytic activity">
    <reaction evidence="2">
        <text>1-hexadecanoyl-sn-glycero-3-phospho-(1'-sn-glycerol) + (9Z)-octadecenoyl-CoA = 1-hexadecanoyl-2-(9Z-octadecenoyl)-sn-glycero-3-phospho-(1'-sn-glycerol) + CoA</text>
        <dbReference type="Rhea" id="RHEA:35891"/>
        <dbReference type="ChEBI" id="CHEBI:57287"/>
        <dbReference type="ChEBI" id="CHEBI:57387"/>
        <dbReference type="ChEBI" id="CHEBI:72841"/>
        <dbReference type="ChEBI" id="CHEBI:75158"/>
    </reaction>
    <physiologicalReaction direction="left-to-right" evidence="2">
        <dbReference type="Rhea" id="RHEA:35892"/>
    </physiologicalReaction>
</comment>
<comment type="catalytic activity">
    <reaction evidence="2">
        <text>1-hexadecanoyl-sn-glycero-3-phospho-(1'-sn-glycerol) + (9Z,12Z)-octadecadienoyl-CoA = 1-hexadecanoyl-2-(9Z,12Z-octadecadienoyl)-sn-glycero-3-phospho-(1'-sn-glycerol) + CoA</text>
        <dbReference type="Rhea" id="RHEA:35895"/>
        <dbReference type="ChEBI" id="CHEBI:57287"/>
        <dbReference type="ChEBI" id="CHEBI:57383"/>
        <dbReference type="ChEBI" id="CHEBI:72840"/>
        <dbReference type="ChEBI" id="CHEBI:75158"/>
    </reaction>
    <physiologicalReaction direction="left-to-right" evidence="2">
        <dbReference type="Rhea" id="RHEA:35896"/>
    </physiologicalReaction>
</comment>
<comment type="catalytic activity">
    <reaction evidence="2">
        <text>1-tetradecanoyl-sn-glycero-3-phospho-(1'-sn-glycerol) + (9Z)-octadecenoyl-CoA = 1-tetradecanoyl-2-(9Z-octadecenoyl)-sn-glycero-3-phospho-(1'-sn-glycerol) + CoA</text>
        <dbReference type="Rhea" id="RHEA:37643"/>
        <dbReference type="ChEBI" id="CHEBI:57287"/>
        <dbReference type="ChEBI" id="CHEBI:57387"/>
        <dbReference type="ChEBI" id="CHEBI:72826"/>
        <dbReference type="ChEBI" id="CHEBI:75161"/>
    </reaction>
    <physiologicalReaction direction="left-to-right" evidence="2">
        <dbReference type="Rhea" id="RHEA:37644"/>
    </physiologicalReaction>
</comment>
<comment type="catalytic activity">
    <reaction evidence="2">
        <text>1-octadecanoyl-sn-glycero-3-phospho-(1'-sn-glycerol) + (9Z)-octadecenoyl-CoA = 1-octadecanoyl-2-(9Z-octadecenoyl)-sn-glycero-3-phospho-(1'-sn-glycerol) + CoA</text>
        <dbReference type="Rhea" id="RHEA:37647"/>
        <dbReference type="ChEBI" id="CHEBI:57287"/>
        <dbReference type="ChEBI" id="CHEBI:57387"/>
        <dbReference type="ChEBI" id="CHEBI:72827"/>
        <dbReference type="ChEBI" id="CHEBI:72845"/>
    </reaction>
    <physiologicalReaction direction="left-to-right" evidence="2">
        <dbReference type="Rhea" id="RHEA:37648"/>
    </physiologicalReaction>
</comment>
<comment type="catalytic activity">
    <reaction evidence="2">
        <text>1-(9Z-octadecenoyl)-sn-glycero-3-phospho-(1'-sn-glycerol) + (9Z)-octadecenoyl-CoA = 1,2-di-(9Z-octadecenoyl)-sn-glycero-3-phospho-(1'-sn-glycerol) + CoA</text>
        <dbReference type="Rhea" id="RHEA:37651"/>
        <dbReference type="ChEBI" id="CHEBI:57287"/>
        <dbReference type="ChEBI" id="CHEBI:57387"/>
        <dbReference type="ChEBI" id="CHEBI:72828"/>
        <dbReference type="ChEBI" id="CHEBI:75163"/>
    </reaction>
    <physiologicalReaction direction="left-to-right" evidence="2">
        <dbReference type="Rhea" id="RHEA:37652"/>
    </physiologicalReaction>
</comment>
<comment type="catalytic activity">
    <reaction evidence="2">
        <text>1-hexadecanoyl-sn-glycero-3-phospho-(1D-myo-inositol) + dodecanoyl-CoA = 1-hexadecanoyl-2-dodecanoyl-sn-glycero-3-phospho-(1D-myo-inositol) + CoA</text>
        <dbReference type="Rhea" id="RHEA:37639"/>
        <dbReference type="ChEBI" id="CHEBI:57287"/>
        <dbReference type="ChEBI" id="CHEBI:57375"/>
        <dbReference type="ChEBI" id="CHEBI:72833"/>
        <dbReference type="ChEBI" id="CHEBI:75160"/>
    </reaction>
    <physiologicalReaction direction="left-to-right" evidence="2">
        <dbReference type="Rhea" id="RHEA:37640"/>
    </physiologicalReaction>
</comment>
<comment type="catalytic activity">
    <reaction evidence="1">
        <text>1',3'-bis-[1-acyl-sn-glycero-3-phospho]-glycerol + (9Z)-octadecenoyl-CoA = 1'-[1-acyl-2-(9Z)-octadecenoyl-sn-glycero-3-phospho],3'-[1-acyl,2-hydroxy-sn-glycero-3-phospho]-glycerol + CoA</text>
        <dbReference type="Rhea" id="RHEA:37615"/>
        <dbReference type="ChEBI" id="CHEBI:57287"/>
        <dbReference type="ChEBI" id="CHEBI:57387"/>
        <dbReference type="ChEBI" id="CHEBI:75137"/>
        <dbReference type="ChEBI" id="CHEBI:75139"/>
    </reaction>
    <physiologicalReaction direction="left-to-right" evidence="1">
        <dbReference type="Rhea" id="RHEA:37616"/>
    </physiologicalReaction>
</comment>
<comment type="catalytic activity">
    <reaction evidence="1">
        <text>1'-[1,2-diacyl-sn-glycero-3-phospho],3'-[1-acyl-sn-glycero-3-phospho]-glycerol + (9Z)-octadecenoyl-CoA = 1'-[1,2-diacyl-sn-glycero-3-phospho],3'-[1-acyl,2-(9Z)-octadecenoyl-sn-glycero-3-phospho]-glycerol + CoA</text>
        <dbReference type="Rhea" id="RHEA:37611"/>
        <dbReference type="ChEBI" id="CHEBI:57287"/>
        <dbReference type="ChEBI" id="CHEBI:57387"/>
        <dbReference type="ChEBI" id="CHEBI:64743"/>
        <dbReference type="ChEBI" id="CHEBI:75140"/>
    </reaction>
    <physiologicalReaction direction="left-to-right" evidence="1">
        <dbReference type="Rhea" id="RHEA:37612"/>
    </physiologicalReaction>
</comment>
<comment type="catalytic activity">
    <reaction evidence="1">
        <text>1'-[1,2-diacyl-sn-glycero-3-phospho],3'-[1-acyl-sn-glycero-3-phospho]-glycerol + (9Z,12Z)-octadecadienoyl-CoA = 1'-[1,2-diacyl-sn-glycero-3-phospho],3'-[1-acyl,2-(9Z,12Z)-octadecadienoyl-sn-glycero-3-phospho]-glycerol + CoA</text>
        <dbReference type="Rhea" id="RHEA:37675"/>
        <dbReference type="ChEBI" id="CHEBI:57287"/>
        <dbReference type="ChEBI" id="CHEBI:57383"/>
        <dbReference type="ChEBI" id="CHEBI:64743"/>
        <dbReference type="ChEBI" id="CHEBI:75205"/>
    </reaction>
    <physiologicalReaction direction="left-to-right" evidence="1">
        <dbReference type="Rhea" id="RHEA:37676"/>
    </physiologicalReaction>
</comment>
<comment type="catalytic activity">
    <reaction evidence="1">
        <text>1'-[1,2-diacyl-sn-glycero-3-phospho],3'-[1-acyl-sn-glycero-3-phospho]-glycerol + dodecanoyl-CoA = 1'-[1,2-diacyl-sn-glycero-3-phospho],3'-[1-acyl,2-dodecanoyl-sn-glycero-3-phospho]-glycerol + CoA</text>
        <dbReference type="Rhea" id="RHEA:37679"/>
        <dbReference type="ChEBI" id="CHEBI:57287"/>
        <dbReference type="ChEBI" id="CHEBI:57375"/>
        <dbReference type="ChEBI" id="CHEBI:64743"/>
        <dbReference type="ChEBI" id="CHEBI:75203"/>
    </reaction>
    <physiologicalReaction direction="left-to-right" evidence="1">
        <dbReference type="Rhea" id="RHEA:37680"/>
    </physiologicalReaction>
</comment>
<comment type="catalytic activity">
    <reaction evidence="1">
        <text>1',3'-bis-[1-acyl-sn-glycero-3-phospho]-glycerol + dodecanoyl-CoA = 1'-[1-acyl-2-dodecanoyl-sn-glycero-3-phospho],3'-[1-acyl,2-hydroxy-sn-glycero-3-phospho]-glycerol + CoA</text>
        <dbReference type="Rhea" id="RHEA:37683"/>
        <dbReference type="ChEBI" id="CHEBI:57287"/>
        <dbReference type="ChEBI" id="CHEBI:57375"/>
        <dbReference type="ChEBI" id="CHEBI:75137"/>
        <dbReference type="ChEBI" id="CHEBI:75201"/>
    </reaction>
    <physiologicalReaction direction="left-to-right" evidence="1">
        <dbReference type="Rhea" id="RHEA:37684"/>
    </physiologicalReaction>
</comment>
<comment type="catalytic activity">
    <reaction evidence="1">
        <text>a 1-acyl-sn-glycero-3-phosphate + (9Z)-octadecenoyl-CoA = a 1-acyl-2-(9Z-octadecenoyl)-sn-glycero-3-phosphate + CoA</text>
        <dbReference type="Rhea" id="RHEA:37427"/>
        <dbReference type="ChEBI" id="CHEBI:57287"/>
        <dbReference type="ChEBI" id="CHEBI:57387"/>
        <dbReference type="ChEBI" id="CHEBI:57970"/>
        <dbReference type="ChEBI" id="CHEBI:74917"/>
    </reaction>
    <physiologicalReaction direction="left-to-right" evidence="1">
        <dbReference type="Rhea" id="RHEA:37428"/>
    </physiologicalReaction>
</comment>
<comment type="catalytic activity">
    <reaction evidence="1">
        <text>1',3'-bis-[1-acyl-sn-glycero-3-phospho]-glycerol + (9Z,12Z)-octadecadienoyl-CoA = 1'-[1-acyl-2-(9Z,12Z)-octadecadienoyl-sn-glycero-3-phospho],3'-[1-acyl,2-hydroxy-sn-glycero-3-phospho]-glycerol + CoA</text>
        <dbReference type="Rhea" id="RHEA:37687"/>
        <dbReference type="ChEBI" id="CHEBI:57287"/>
        <dbReference type="ChEBI" id="CHEBI:57383"/>
        <dbReference type="ChEBI" id="CHEBI:75137"/>
        <dbReference type="ChEBI" id="CHEBI:75209"/>
    </reaction>
    <physiologicalReaction direction="left-to-right" evidence="1">
        <dbReference type="Rhea" id="RHEA:37688"/>
    </physiologicalReaction>
</comment>
<comment type="catalytic activity">
    <reaction evidence="1">
        <text>1',3'-bis-[1-acyl-sn-glycero-3-phospho]-glycerol + hexadecanoyl-CoA = 1'-[1-acyl-2-hexadecanoyl-sn-glycero-3-phospho],3'-[1-acyl,2-hydroxy-sn-glycero-3-phospho]-glycerol + CoA</text>
        <dbReference type="Rhea" id="RHEA:37691"/>
        <dbReference type="ChEBI" id="CHEBI:57287"/>
        <dbReference type="ChEBI" id="CHEBI:57379"/>
        <dbReference type="ChEBI" id="CHEBI:75137"/>
        <dbReference type="ChEBI" id="CHEBI:75207"/>
    </reaction>
    <physiologicalReaction direction="left-to-right" evidence="1">
        <dbReference type="Rhea" id="RHEA:37692"/>
    </physiologicalReaction>
</comment>
<comment type="catalytic activity">
    <reaction evidence="1">
        <text>1',3'-bis-[1-acyl-sn-glycero-3-phospho]-glycerol + octadecanoyl-CoA = 1'-[1-acyl-2-octadecanoyl-sn-glycero-3-phospho],3'-[1-acyl,2-hydroxy-sn-glycero-3-phospho]-glycerol + CoA</text>
        <dbReference type="Rhea" id="RHEA:37695"/>
        <dbReference type="ChEBI" id="CHEBI:57287"/>
        <dbReference type="ChEBI" id="CHEBI:57394"/>
        <dbReference type="ChEBI" id="CHEBI:75137"/>
        <dbReference type="ChEBI" id="CHEBI:75208"/>
    </reaction>
    <physiologicalReaction direction="left-to-right" evidence="1">
        <dbReference type="Rhea" id="RHEA:37696"/>
    </physiologicalReaction>
</comment>
<comment type="catalytic activity">
    <reaction evidence="1">
        <text>1'-[1,2-diacyl-sn-glycero-3-phospho],3'-[1-acyl-sn-glycero-3-phospho]-glycerol + octanoyl-CoA = 1'-[1,2-diacyl-sn-glycero-3-phospho],3'-[1-acyl,2-octanoyl-sn-glycero-3-phospho]-glycerol + CoA</text>
        <dbReference type="Rhea" id="RHEA:38623"/>
        <dbReference type="ChEBI" id="CHEBI:57287"/>
        <dbReference type="ChEBI" id="CHEBI:57386"/>
        <dbReference type="ChEBI" id="CHEBI:64743"/>
        <dbReference type="ChEBI" id="CHEBI:75990"/>
    </reaction>
    <physiologicalReaction direction="left-to-right" evidence="1">
        <dbReference type="Rhea" id="RHEA:38624"/>
    </physiologicalReaction>
</comment>
<comment type="catalytic activity">
    <reaction evidence="1">
        <text>1',3'-bis-[1-acyl-sn-glycero-3-phospho]-glycerol + octanoyl-CoA = 1'-[1-acyl-2-octanoyl-sn-glycero-3-phospho],3'-[1-acyl,2-hydroxy-sn-glycero-3-phospho]-glycerol + CoA</text>
        <dbReference type="Rhea" id="RHEA:38627"/>
        <dbReference type="ChEBI" id="CHEBI:57287"/>
        <dbReference type="ChEBI" id="CHEBI:57386"/>
        <dbReference type="ChEBI" id="CHEBI:75137"/>
        <dbReference type="ChEBI" id="CHEBI:75993"/>
    </reaction>
    <physiologicalReaction direction="left-to-right" evidence="1">
        <dbReference type="Rhea" id="RHEA:38628"/>
    </physiologicalReaction>
</comment>
<comment type="catalytic activity">
    <reaction evidence="1">
        <text>1'-[1,2-diacyl-sn-glycero-3-phospho],3'-[1-acyl-sn-glycero-3-phospho]-glycerol + hexadecanoyl-CoA = 1'-[1,2-diacyl-sn-glycero-3-phospho],3'-[1-acyl,2-hexadecanoyl-sn-glycero-3-phospho]-glycerol + CoA</text>
        <dbReference type="Rhea" id="RHEA:38631"/>
        <dbReference type="ChEBI" id="CHEBI:57287"/>
        <dbReference type="ChEBI" id="CHEBI:57379"/>
        <dbReference type="ChEBI" id="CHEBI:64743"/>
        <dbReference type="ChEBI" id="CHEBI:75994"/>
    </reaction>
    <physiologicalReaction direction="left-to-right" evidence="1">
        <dbReference type="Rhea" id="RHEA:38632"/>
    </physiologicalReaction>
</comment>
<comment type="catalytic activity">
    <reaction evidence="1">
        <text>1'-[1,2-diacyl-sn-glycero-3-phospho],3'-[1-acyl-sn-glycero-3-phospho]-glycerol + (5Z,8Z,11Z,14Z)-eicosatetraenoyl-CoA = 1'-[1,2-diacyl-sn-glycero-3-phospho],3'-[1-acyl,2-(5Z,8Z,11Z,14Z)-eicosatetraenoyl-sn-glycero-3-phospho]-glycerol + CoA</text>
        <dbReference type="Rhea" id="RHEA:38635"/>
        <dbReference type="ChEBI" id="CHEBI:57287"/>
        <dbReference type="ChEBI" id="CHEBI:57368"/>
        <dbReference type="ChEBI" id="CHEBI:64743"/>
        <dbReference type="ChEBI" id="CHEBI:75995"/>
    </reaction>
    <physiologicalReaction direction="left-to-right" evidence="1">
        <dbReference type="Rhea" id="RHEA:38636"/>
    </physiologicalReaction>
</comment>
<comment type="catalytic activity">
    <reaction evidence="1">
        <text>1',3'-bis-[1-acyl-sn-glycero-3-phospho]-glycerol + (5Z,8Z,11Z,14Z)-eicosatetraenoyl-CoA = 1'-[1-acyl-2-(5Z,8Z,11Z,14Z)-eicosatetraenoyl-sn-glycero-3-phospho],3'-[1-acyl,2-hydroxy-sn-glycero-3-phospho]-glycerol + CoA</text>
        <dbReference type="Rhea" id="RHEA:38639"/>
        <dbReference type="ChEBI" id="CHEBI:57287"/>
        <dbReference type="ChEBI" id="CHEBI:57368"/>
        <dbReference type="ChEBI" id="CHEBI:75137"/>
        <dbReference type="ChEBI" id="CHEBI:75996"/>
    </reaction>
    <physiologicalReaction direction="left-to-right" evidence="1">
        <dbReference type="Rhea" id="RHEA:38640"/>
    </physiologicalReaction>
</comment>
<comment type="catalytic activity">
    <reaction evidence="1">
        <text>a 1-acyl-sn-glycero-3-phospho-(1D-myo-inositol) + octadecanoyl-CoA = a 1-acyl-2-octadecanoyl-sn-glycero-3-phospho-(1D-myo-inositol) + CoA</text>
        <dbReference type="Rhea" id="RHEA:43960"/>
        <dbReference type="ChEBI" id="CHEBI:57287"/>
        <dbReference type="ChEBI" id="CHEBI:57394"/>
        <dbReference type="ChEBI" id="CHEBI:64771"/>
        <dbReference type="ChEBI" id="CHEBI:83939"/>
    </reaction>
    <physiologicalReaction direction="left-to-right" evidence="1">
        <dbReference type="Rhea" id="RHEA:43961"/>
    </physiologicalReaction>
</comment>
<comment type="catalytic activity">
    <reaction evidence="1">
        <text>a 2-acyl-sn-glycero-3-phospho-D-myo-inositol + octadecanoyl-CoA = 1-octadecanoyl-2-acyl-sn-glycero-3-phospho-1D-myo-inositol + CoA</text>
        <dbReference type="Rhea" id="RHEA:43964"/>
        <dbReference type="ChEBI" id="CHEBI:57287"/>
        <dbReference type="ChEBI" id="CHEBI:57394"/>
        <dbReference type="ChEBI" id="CHEBI:64872"/>
        <dbReference type="ChEBI" id="CHEBI:65055"/>
    </reaction>
    <physiologicalReaction direction="left-to-right" evidence="1">
        <dbReference type="Rhea" id="RHEA:43965"/>
    </physiologicalReaction>
</comment>
<comment type="pathway">
    <text>Phospholipid metabolism; CDP-diacylglycerol biosynthesis; CDP-diacylglycerol from sn-glycerol 3-phosphate: step 2/3.</text>
</comment>
<comment type="subcellular location">
    <subcellularLocation>
        <location evidence="2">Endoplasmic reticulum membrane</location>
        <topology evidence="4">Multi-pass membrane protein</topology>
    </subcellularLocation>
</comment>
<comment type="domain">
    <text evidence="3">The HXXXXD motif is essential for acyltransferase activity and may constitute the binding site for the phosphate moiety of the glycerol-3-phosphate.</text>
</comment>
<comment type="similarity">
    <text evidence="6">Belongs to the 1-acyl-sn-glycerol-3-phosphate acyltransferase family.</text>
</comment>
<accession>Q6NYV8</accession>
<protein>
    <recommendedName>
        <fullName>Lysocardiolipin acyltransferase 1</fullName>
        <ecNumber evidence="1">2.3.1.-</ecNumber>
    </recommendedName>
    <alternativeName>
        <fullName evidence="2">1-acylglycerol-3-phosphate O-acyltransferase 8</fullName>
        <shortName>1-AGP acyltransferase 8</shortName>
        <shortName>1-AGPAT 8</shortName>
        <ecNumber evidence="2">2.3.1.51</ecNumber>
    </alternativeName>
    <alternativeName>
        <fullName evidence="1">Acyl-CoA:lysocardiolipin acyltransferase 1</fullName>
    </alternativeName>
</protein>